<protein>
    <recommendedName>
        <fullName evidence="1">Succinyl-diaminopimelate desuccinylase</fullName>
        <shortName evidence="1">SDAP desuccinylase</shortName>
        <ecNumber evidence="1">3.5.1.18</ecNumber>
    </recommendedName>
    <alternativeName>
        <fullName evidence="1">N-succinyl-LL-2,6-diaminoheptanedioate amidohydrolase</fullName>
    </alternativeName>
</protein>
<accession>A1JL17</accession>
<sequence>MICPVIDLAQQLIKRPSLSPNDAGCQEIMIQRLEAIGFTVEPMNFGDTLNFWAWRGEGETLAFAGHTDVVPTGDESHWCSPPFEPTIRDGMLYGRGAADMKGSLAAMVVAAERFVAAHPNHKGRLAFMITSDEEAKAINGTVKVVNALMARHERLDYCLVGEPSSTDRVGDVVKNGRRGSITANLHIHGIQGHVAYPHLADNPVHRAIPALNELVTTQWDEGNEFFPATSMQIANLHAGTGSNNVIPGEFYVQFNFRFSTELTDSMIKQRVEALLERHQLDYTLEWVLSGQPFLTARGALVDAVVNAVEHYAEITPQLLTTGGTSDGRFIALMGAQVVELGPVNATIHKVNECVHAADLQLLSRMYQKIMEQLIA</sequence>
<comment type="function">
    <text evidence="1">Catalyzes the hydrolysis of N-succinyl-L,L-diaminopimelic acid (SDAP), forming succinate and LL-2,6-diaminopimelate (DAP), an intermediate involved in the bacterial biosynthesis of lysine and meso-diaminopimelic acid, an essential component of bacterial cell walls.</text>
</comment>
<comment type="catalytic activity">
    <reaction evidence="1">
        <text>N-succinyl-(2S,6S)-2,6-diaminopimelate + H2O = (2S,6S)-2,6-diaminopimelate + succinate</text>
        <dbReference type="Rhea" id="RHEA:22608"/>
        <dbReference type="ChEBI" id="CHEBI:15377"/>
        <dbReference type="ChEBI" id="CHEBI:30031"/>
        <dbReference type="ChEBI" id="CHEBI:57609"/>
        <dbReference type="ChEBI" id="CHEBI:58087"/>
        <dbReference type="EC" id="3.5.1.18"/>
    </reaction>
</comment>
<comment type="cofactor">
    <cofactor evidence="1">
        <name>Zn(2+)</name>
        <dbReference type="ChEBI" id="CHEBI:29105"/>
    </cofactor>
    <cofactor evidence="1">
        <name>Co(2+)</name>
        <dbReference type="ChEBI" id="CHEBI:48828"/>
    </cofactor>
    <text evidence="1">Binds 2 Zn(2+) or Co(2+) ions per subunit.</text>
</comment>
<comment type="pathway">
    <text evidence="1">Amino-acid biosynthesis; L-lysine biosynthesis via DAP pathway; LL-2,6-diaminopimelate from (S)-tetrahydrodipicolinate (succinylase route): step 3/3.</text>
</comment>
<comment type="subunit">
    <text evidence="1">Homodimer.</text>
</comment>
<comment type="similarity">
    <text evidence="1">Belongs to the peptidase M20A family. DapE subfamily.</text>
</comment>
<organism>
    <name type="scientific">Yersinia enterocolitica serotype O:8 / biotype 1B (strain NCTC 13174 / 8081)</name>
    <dbReference type="NCBI Taxonomy" id="393305"/>
    <lineage>
        <taxon>Bacteria</taxon>
        <taxon>Pseudomonadati</taxon>
        <taxon>Pseudomonadota</taxon>
        <taxon>Gammaproteobacteria</taxon>
        <taxon>Enterobacterales</taxon>
        <taxon>Yersiniaceae</taxon>
        <taxon>Yersinia</taxon>
    </lineage>
</organism>
<name>DAPE_YERE8</name>
<proteinExistence type="inferred from homology"/>
<dbReference type="EC" id="3.5.1.18" evidence="1"/>
<dbReference type="EMBL" id="AM286415">
    <property type="protein sequence ID" value="CAL11241.1"/>
    <property type="molecule type" value="Genomic_DNA"/>
</dbReference>
<dbReference type="RefSeq" id="WP_011815825.1">
    <property type="nucleotide sequence ID" value="NC_008800.1"/>
</dbReference>
<dbReference type="RefSeq" id="YP_001005474.1">
    <property type="nucleotide sequence ID" value="NC_008800.1"/>
</dbReference>
<dbReference type="SMR" id="A1JL17"/>
<dbReference type="MEROPS" id="M20.010"/>
<dbReference type="KEGG" id="yen:YE1147"/>
<dbReference type="PATRIC" id="fig|393305.7.peg.1249"/>
<dbReference type="eggNOG" id="COG0624">
    <property type="taxonomic scope" value="Bacteria"/>
</dbReference>
<dbReference type="HOGENOM" id="CLU_021802_4_0_6"/>
<dbReference type="OrthoDB" id="9809784at2"/>
<dbReference type="UniPathway" id="UPA00034">
    <property type="reaction ID" value="UER00021"/>
</dbReference>
<dbReference type="Proteomes" id="UP000000642">
    <property type="component" value="Chromosome"/>
</dbReference>
<dbReference type="GO" id="GO:0008777">
    <property type="term" value="F:acetylornithine deacetylase activity"/>
    <property type="evidence" value="ECO:0007669"/>
    <property type="project" value="TreeGrafter"/>
</dbReference>
<dbReference type="GO" id="GO:0050897">
    <property type="term" value="F:cobalt ion binding"/>
    <property type="evidence" value="ECO:0007669"/>
    <property type="project" value="UniProtKB-UniRule"/>
</dbReference>
<dbReference type="GO" id="GO:0009014">
    <property type="term" value="F:succinyl-diaminopimelate desuccinylase activity"/>
    <property type="evidence" value="ECO:0007669"/>
    <property type="project" value="UniProtKB-UniRule"/>
</dbReference>
<dbReference type="GO" id="GO:0008270">
    <property type="term" value="F:zinc ion binding"/>
    <property type="evidence" value="ECO:0007669"/>
    <property type="project" value="UniProtKB-UniRule"/>
</dbReference>
<dbReference type="GO" id="GO:0019877">
    <property type="term" value="P:diaminopimelate biosynthetic process"/>
    <property type="evidence" value="ECO:0007669"/>
    <property type="project" value="UniProtKB-UniRule"/>
</dbReference>
<dbReference type="GO" id="GO:0006526">
    <property type="term" value="P:L-arginine biosynthetic process"/>
    <property type="evidence" value="ECO:0007669"/>
    <property type="project" value="TreeGrafter"/>
</dbReference>
<dbReference type="GO" id="GO:0009089">
    <property type="term" value="P:lysine biosynthetic process via diaminopimelate"/>
    <property type="evidence" value="ECO:0007669"/>
    <property type="project" value="UniProtKB-UniRule"/>
</dbReference>
<dbReference type="CDD" id="cd03891">
    <property type="entry name" value="M20_DapE_proteobac"/>
    <property type="match status" value="1"/>
</dbReference>
<dbReference type="FunFam" id="3.30.70.360:FF:000011">
    <property type="entry name" value="Succinyl-diaminopimelate desuccinylase"/>
    <property type="match status" value="1"/>
</dbReference>
<dbReference type="FunFam" id="3.40.630.10:FF:000005">
    <property type="entry name" value="Succinyl-diaminopimelate desuccinylase"/>
    <property type="match status" value="1"/>
</dbReference>
<dbReference type="FunFam" id="3.40.630.10:FF:000010">
    <property type="entry name" value="Succinyl-diaminopimelate desuccinylase"/>
    <property type="match status" value="1"/>
</dbReference>
<dbReference type="Gene3D" id="3.40.630.10">
    <property type="entry name" value="Zn peptidases"/>
    <property type="match status" value="2"/>
</dbReference>
<dbReference type="HAMAP" id="MF_01690">
    <property type="entry name" value="DapE"/>
    <property type="match status" value="1"/>
</dbReference>
<dbReference type="InterPro" id="IPR001261">
    <property type="entry name" value="ArgE/DapE_CS"/>
</dbReference>
<dbReference type="InterPro" id="IPR036264">
    <property type="entry name" value="Bact_exopeptidase_dim_dom"/>
</dbReference>
<dbReference type="InterPro" id="IPR005941">
    <property type="entry name" value="DapE_proteobac"/>
</dbReference>
<dbReference type="InterPro" id="IPR002933">
    <property type="entry name" value="Peptidase_M20"/>
</dbReference>
<dbReference type="InterPro" id="IPR011650">
    <property type="entry name" value="Peptidase_M20_dimer"/>
</dbReference>
<dbReference type="InterPro" id="IPR050072">
    <property type="entry name" value="Peptidase_M20A"/>
</dbReference>
<dbReference type="NCBIfam" id="TIGR01246">
    <property type="entry name" value="dapE_proteo"/>
    <property type="match status" value="1"/>
</dbReference>
<dbReference type="NCBIfam" id="NF009557">
    <property type="entry name" value="PRK13009.1"/>
    <property type="match status" value="1"/>
</dbReference>
<dbReference type="PANTHER" id="PTHR43808">
    <property type="entry name" value="ACETYLORNITHINE DEACETYLASE"/>
    <property type="match status" value="1"/>
</dbReference>
<dbReference type="PANTHER" id="PTHR43808:SF31">
    <property type="entry name" value="N-ACETYL-L-CITRULLINE DEACETYLASE"/>
    <property type="match status" value="1"/>
</dbReference>
<dbReference type="Pfam" id="PF07687">
    <property type="entry name" value="M20_dimer"/>
    <property type="match status" value="1"/>
</dbReference>
<dbReference type="Pfam" id="PF01546">
    <property type="entry name" value="Peptidase_M20"/>
    <property type="match status" value="1"/>
</dbReference>
<dbReference type="SUPFAM" id="SSF55031">
    <property type="entry name" value="Bacterial exopeptidase dimerisation domain"/>
    <property type="match status" value="1"/>
</dbReference>
<dbReference type="SUPFAM" id="SSF53187">
    <property type="entry name" value="Zn-dependent exopeptidases"/>
    <property type="match status" value="1"/>
</dbReference>
<dbReference type="PROSITE" id="PS00758">
    <property type="entry name" value="ARGE_DAPE_CPG2_1"/>
    <property type="match status" value="1"/>
</dbReference>
<evidence type="ECO:0000255" key="1">
    <source>
        <dbReference type="HAMAP-Rule" id="MF_01690"/>
    </source>
</evidence>
<feature type="chain" id="PRO_0000375793" description="Succinyl-diaminopimelate desuccinylase">
    <location>
        <begin position="1"/>
        <end position="375"/>
    </location>
</feature>
<feature type="active site" evidence="1">
    <location>
        <position position="68"/>
    </location>
</feature>
<feature type="active site" description="Proton acceptor" evidence="1">
    <location>
        <position position="133"/>
    </location>
</feature>
<feature type="binding site" evidence="1">
    <location>
        <position position="66"/>
    </location>
    <ligand>
        <name>Zn(2+)</name>
        <dbReference type="ChEBI" id="CHEBI:29105"/>
        <label>1</label>
    </ligand>
</feature>
<feature type="binding site" evidence="1">
    <location>
        <position position="99"/>
    </location>
    <ligand>
        <name>Zn(2+)</name>
        <dbReference type="ChEBI" id="CHEBI:29105"/>
        <label>1</label>
    </ligand>
</feature>
<feature type="binding site" evidence="1">
    <location>
        <position position="99"/>
    </location>
    <ligand>
        <name>Zn(2+)</name>
        <dbReference type="ChEBI" id="CHEBI:29105"/>
        <label>2</label>
    </ligand>
</feature>
<feature type="binding site" evidence="1">
    <location>
        <position position="134"/>
    </location>
    <ligand>
        <name>Zn(2+)</name>
        <dbReference type="ChEBI" id="CHEBI:29105"/>
        <label>2</label>
    </ligand>
</feature>
<feature type="binding site" evidence="1">
    <location>
        <position position="162"/>
    </location>
    <ligand>
        <name>Zn(2+)</name>
        <dbReference type="ChEBI" id="CHEBI:29105"/>
        <label>1</label>
    </ligand>
</feature>
<feature type="binding site" evidence="1">
    <location>
        <position position="348"/>
    </location>
    <ligand>
        <name>Zn(2+)</name>
        <dbReference type="ChEBI" id="CHEBI:29105"/>
        <label>2</label>
    </ligand>
</feature>
<keyword id="KW-0028">Amino-acid biosynthesis</keyword>
<keyword id="KW-0170">Cobalt</keyword>
<keyword id="KW-0220">Diaminopimelate biosynthesis</keyword>
<keyword id="KW-0378">Hydrolase</keyword>
<keyword id="KW-0457">Lysine biosynthesis</keyword>
<keyword id="KW-0479">Metal-binding</keyword>
<keyword id="KW-0862">Zinc</keyword>
<reference key="1">
    <citation type="journal article" date="2006" name="PLoS Genet.">
        <title>The complete genome sequence and comparative genome analysis of the high pathogenicity Yersinia enterocolitica strain 8081.</title>
        <authorList>
            <person name="Thomson N.R."/>
            <person name="Howard S."/>
            <person name="Wren B.W."/>
            <person name="Holden M.T.G."/>
            <person name="Crossman L."/>
            <person name="Challis G.L."/>
            <person name="Churcher C."/>
            <person name="Mungall K."/>
            <person name="Brooks K."/>
            <person name="Chillingworth T."/>
            <person name="Feltwell T."/>
            <person name="Abdellah Z."/>
            <person name="Hauser H."/>
            <person name="Jagels K."/>
            <person name="Maddison M."/>
            <person name="Moule S."/>
            <person name="Sanders M."/>
            <person name="Whitehead S."/>
            <person name="Quail M.A."/>
            <person name="Dougan G."/>
            <person name="Parkhill J."/>
            <person name="Prentice M.B."/>
        </authorList>
    </citation>
    <scope>NUCLEOTIDE SEQUENCE [LARGE SCALE GENOMIC DNA]</scope>
    <source>
        <strain>NCTC 13174 / 8081</strain>
    </source>
</reference>
<gene>
    <name evidence="1" type="primary">dapE</name>
    <name type="ordered locus">YE1147</name>
</gene>